<protein>
    <recommendedName>
        <fullName>Protein transport protein Sec61 subunit gamma</fullName>
    </recommendedName>
</protein>
<accession>Q3T104</accession>
<evidence type="ECO:0000250" key="1">
    <source>
        <dbReference type="UniProtKB" id="P60058"/>
    </source>
</evidence>
<evidence type="ECO:0000250" key="2">
    <source>
        <dbReference type="UniProtKB" id="P60059"/>
    </source>
</evidence>
<evidence type="ECO:0000250" key="3">
    <source>
        <dbReference type="UniProtKB" id="P61619"/>
    </source>
</evidence>
<evidence type="ECO:0000255" key="4"/>
<evidence type="ECO:0000305" key="5"/>
<reference key="1">
    <citation type="submission" date="2005-08" db="EMBL/GenBank/DDBJ databases">
        <authorList>
            <consortium name="NIH - Mammalian Gene Collection (MGC) project"/>
        </authorList>
    </citation>
    <scope>NUCLEOTIDE SEQUENCE [LARGE SCALE MRNA]</scope>
    <source>
        <strain>Crossbred X Angus</strain>
        <tissue>Ileum</tissue>
    </source>
</reference>
<comment type="function">
    <text evidence="1 2 3">Component of SEC61 channel-forming translocon complex that mediates transport of signal peptide-containing precursor polypeptides across the endoplasmic reticulum (ER). Forms a ribosome receptor and a gated pore in the ER membrane, both functions required for cotranslational translocation of nascent polypeptides (By similarity). The SEC61 channel is also involved in ER membrane insertion of transmembrane proteins: it mediates membrane insertion of the first few transmembrane segments of proteins, while insertion of subsequent transmembrane regions of multi-pass membrane proteins is mediated by the multi-pass translocon (MPT) complex (By similarity). The SEC61 channel cooperates with the translocating protein TRAM1 to import nascent proteins into the ER (By similarity).</text>
</comment>
<comment type="subunit">
    <text evidence="1 2">The SEC61 channel-forming translocon complex consists of channel-forming core components SEC61A1, SEC61B and SEC61G and different auxiliary components such as SEC62 and SEC63 (By similarity). The SEC61 channel associates with the multi-pass translocon (MPT) complex (By similarity).</text>
</comment>
<comment type="subcellular location">
    <subcellularLocation>
        <location evidence="2">Endoplasmic reticulum membrane</location>
        <topology evidence="4">Single-pass membrane protein</topology>
    </subcellularLocation>
</comment>
<comment type="similarity">
    <text evidence="5">Belongs to the SecE/SEC61-gamma family.</text>
</comment>
<keyword id="KW-0007">Acetylation</keyword>
<keyword id="KW-0256">Endoplasmic reticulum</keyword>
<keyword id="KW-0472">Membrane</keyword>
<keyword id="KW-0597">Phosphoprotein</keyword>
<keyword id="KW-0653">Protein transport</keyword>
<keyword id="KW-1185">Reference proteome</keyword>
<keyword id="KW-0811">Translocation</keyword>
<keyword id="KW-0812">Transmembrane</keyword>
<keyword id="KW-1133">Transmembrane helix</keyword>
<keyword id="KW-0813">Transport</keyword>
<name>SC61G_BOVIN</name>
<proteinExistence type="inferred from homology"/>
<organism>
    <name type="scientific">Bos taurus</name>
    <name type="common">Bovine</name>
    <dbReference type="NCBI Taxonomy" id="9913"/>
    <lineage>
        <taxon>Eukaryota</taxon>
        <taxon>Metazoa</taxon>
        <taxon>Chordata</taxon>
        <taxon>Craniata</taxon>
        <taxon>Vertebrata</taxon>
        <taxon>Euteleostomi</taxon>
        <taxon>Mammalia</taxon>
        <taxon>Eutheria</taxon>
        <taxon>Laurasiatheria</taxon>
        <taxon>Artiodactyla</taxon>
        <taxon>Ruminantia</taxon>
        <taxon>Pecora</taxon>
        <taxon>Bovidae</taxon>
        <taxon>Bovinae</taxon>
        <taxon>Bos</taxon>
    </lineage>
</organism>
<gene>
    <name type="primary">SEC61G</name>
</gene>
<dbReference type="EMBL" id="BC102186">
    <property type="protein sequence ID" value="AAI02187.1"/>
    <property type="molecule type" value="mRNA"/>
</dbReference>
<dbReference type="RefSeq" id="NP_001035676.1">
    <property type="nucleotide sequence ID" value="NM_001040586.2"/>
</dbReference>
<dbReference type="SMR" id="Q3T104"/>
<dbReference type="BioGRID" id="543384">
    <property type="interactions" value="1"/>
</dbReference>
<dbReference type="CORUM" id="Q3T104"/>
<dbReference type="FunCoup" id="Q3T104">
    <property type="interactions" value="1530"/>
</dbReference>
<dbReference type="STRING" id="9913.ENSBTAP00000019929"/>
<dbReference type="PaxDb" id="9913-ENSBTAP00000019929"/>
<dbReference type="Ensembl" id="ENSBTAT00000019929.4">
    <property type="protein sequence ID" value="ENSBTAP00000019929.3"/>
    <property type="gene ID" value="ENSBTAG00000014971.4"/>
</dbReference>
<dbReference type="GeneID" id="615778"/>
<dbReference type="KEGG" id="bta:615778"/>
<dbReference type="CTD" id="23480"/>
<dbReference type="VEuPathDB" id="HostDB:ENSBTAG00000014971"/>
<dbReference type="VGNC" id="VGNC:49154">
    <property type="gene designation" value="SEC61G"/>
</dbReference>
<dbReference type="eggNOG" id="KOG3498">
    <property type="taxonomic scope" value="Eukaryota"/>
</dbReference>
<dbReference type="GeneTree" id="ENSGT00390000001319"/>
<dbReference type="HOGENOM" id="CLU_167752_2_0_1"/>
<dbReference type="InParanoid" id="Q3T104"/>
<dbReference type="OMA" id="KPDQKEY"/>
<dbReference type="OrthoDB" id="2401875at2759"/>
<dbReference type="TreeFam" id="TF300232"/>
<dbReference type="Reactome" id="R-BTA-9609523">
    <property type="pathway name" value="Insertion of tail-anchored proteins into the endoplasmic reticulum membrane"/>
</dbReference>
<dbReference type="Proteomes" id="UP000009136">
    <property type="component" value="Chromosome 22"/>
</dbReference>
<dbReference type="Bgee" id="ENSBTAG00000014971">
    <property type="expression patterns" value="Expressed in caput epididymis and 106 other cell types or tissues"/>
</dbReference>
<dbReference type="GO" id="GO:0071261">
    <property type="term" value="C:Ssh1 translocon complex"/>
    <property type="evidence" value="ECO:0000318"/>
    <property type="project" value="GO_Central"/>
</dbReference>
<dbReference type="GO" id="GO:0008320">
    <property type="term" value="F:protein transmembrane transporter activity"/>
    <property type="evidence" value="ECO:0000250"/>
    <property type="project" value="UniProtKB"/>
</dbReference>
<dbReference type="GO" id="GO:0043022">
    <property type="term" value="F:ribosome binding"/>
    <property type="evidence" value="ECO:0000250"/>
    <property type="project" value="UniProtKB"/>
</dbReference>
<dbReference type="GO" id="GO:0031204">
    <property type="term" value="P:post-translational protein targeting to membrane, translocation"/>
    <property type="evidence" value="ECO:0000318"/>
    <property type="project" value="GO_Central"/>
</dbReference>
<dbReference type="GO" id="GO:0045047">
    <property type="term" value="P:protein targeting to ER"/>
    <property type="evidence" value="ECO:0000250"/>
    <property type="project" value="UniProtKB"/>
</dbReference>
<dbReference type="FunFam" id="1.20.5.820:FF:000001">
    <property type="entry name" value="Transport protein Sec61 subunit gamma"/>
    <property type="match status" value="1"/>
</dbReference>
<dbReference type="Gene3D" id="1.20.5.820">
    <property type="entry name" value="Preprotein translocase SecE subunit"/>
    <property type="match status" value="1"/>
</dbReference>
<dbReference type="HAMAP" id="MF_00422">
    <property type="entry name" value="SecE"/>
    <property type="match status" value="1"/>
</dbReference>
<dbReference type="InterPro" id="IPR023391">
    <property type="entry name" value="Prot_translocase_SecE_dom_sf"/>
</dbReference>
<dbReference type="InterPro" id="IPR008158">
    <property type="entry name" value="Translocase_Sec61-g"/>
</dbReference>
<dbReference type="InterPro" id="IPR001901">
    <property type="entry name" value="Translocase_SecE/Sec61-g"/>
</dbReference>
<dbReference type="NCBIfam" id="TIGR00327">
    <property type="entry name" value="secE_euk_arch"/>
    <property type="match status" value="1"/>
</dbReference>
<dbReference type="PANTHER" id="PTHR12309">
    <property type="entry name" value="SEC61 GAMMA SUBUNIT"/>
    <property type="match status" value="1"/>
</dbReference>
<dbReference type="Pfam" id="PF00584">
    <property type="entry name" value="SecE"/>
    <property type="match status" value="1"/>
</dbReference>
<dbReference type="SUPFAM" id="SSF103456">
    <property type="entry name" value="Preprotein translocase SecE subunit"/>
    <property type="match status" value="1"/>
</dbReference>
<dbReference type="PROSITE" id="PS01067">
    <property type="entry name" value="SECE_SEC61G"/>
    <property type="match status" value="1"/>
</dbReference>
<sequence length="68" mass="7741">MDQVMQFVEPSRQFVKDSIRLVKRCTKPDRKEFQKIAMATAIGFAIMGFIGFFVKLIHIPINNIIVGG</sequence>
<feature type="chain" id="PRO_0000245506" description="Protein transport protein Sec61 subunit gamma">
    <location>
        <begin position="1"/>
        <end position="68"/>
    </location>
</feature>
<feature type="topological domain" description="Cytoplasmic" evidence="4">
    <location>
        <begin position="1"/>
        <end position="32"/>
    </location>
</feature>
<feature type="transmembrane region" description="Helical" evidence="4">
    <location>
        <begin position="33"/>
        <end position="61"/>
    </location>
</feature>
<feature type="topological domain" description="Extracellular" evidence="4">
    <location>
        <begin position="62"/>
        <end position="68"/>
    </location>
</feature>
<feature type="modified residue" description="N-acetylmethionine" evidence="2">
    <location>
        <position position="1"/>
    </location>
</feature>
<feature type="modified residue" description="Phosphoserine" evidence="2">
    <location>
        <position position="18"/>
    </location>
</feature>